<organism>
    <name type="scientific">Clostridium perfringens (strain 13 / Type A)</name>
    <dbReference type="NCBI Taxonomy" id="195102"/>
    <lineage>
        <taxon>Bacteria</taxon>
        <taxon>Bacillati</taxon>
        <taxon>Bacillota</taxon>
        <taxon>Clostridia</taxon>
        <taxon>Eubacteriales</taxon>
        <taxon>Clostridiaceae</taxon>
        <taxon>Clostridium</taxon>
    </lineage>
</organism>
<dbReference type="EMBL" id="BA000016">
    <property type="protein sequence ID" value="BAB79838.1"/>
    <property type="molecule type" value="Genomic_DNA"/>
</dbReference>
<dbReference type="RefSeq" id="WP_003448605.1">
    <property type="nucleotide sequence ID" value="NC_003366.1"/>
</dbReference>
<dbReference type="SMR" id="Q8XP33"/>
<dbReference type="STRING" id="195102.gene:10489376"/>
<dbReference type="KEGG" id="cpe:CPE0132"/>
<dbReference type="HOGENOM" id="CLU_030805_9_3_9"/>
<dbReference type="Proteomes" id="UP000000818">
    <property type="component" value="Chromosome"/>
</dbReference>
<dbReference type="CDD" id="cd00885">
    <property type="entry name" value="cinA"/>
    <property type="match status" value="1"/>
</dbReference>
<dbReference type="Gene3D" id="3.30.70.2860">
    <property type="match status" value="1"/>
</dbReference>
<dbReference type="Gene3D" id="3.90.950.20">
    <property type="entry name" value="CinA-like"/>
    <property type="match status" value="1"/>
</dbReference>
<dbReference type="Gene3D" id="3.40.980.10">
    <property type="entry name" value="MoaB/Mog-like domain"/>
    <property type="match status" value="1"/>
</dbReference>
<dbReference type="HAMAP" id="MF_00226_B">
    <property type="entry name" value="CinA_B"/>
    <property type="match status" value="1"/>
</dbReference>
<dbReference type="InterPro" id="IPR050101">
    <property type="entry name" value="CinA"/>
</dbReference>
<dbReference type="InterPro" id="IPR036653">
    <property type="entry name" value="CinA-like_C"/>
</dbReference>
<dbReference type="InterPro" id="IPR008136">
    <property type="entry name" value="CinA_C"/>
</dbReference>
<dbReference type="InterPro" id="IPR041424">
    <property type="entry name" value="CinA_KH"/>
</dbReference>
<dbReference type="InterPro" id="IPR008135">
    <property type="entry name" value="Competence-induced_CinA"/>
</dbReference>
<dbReference type="InterPro" id="IPR036425">
    <property type="entry name" value="MoaB/Mog-like_dom_sf"/>
</dbReference>
<dbReference type="InterPro" id="IPR001453">
    <property type="entry name" value="MoaB/Mog_dom"/>
</dbReference>
<dbReference type="NCBIfam" id="TIGR00200">
    <property type="entry name" value="cinA_nterm"/>
    <property type="match status" value="1"/>
</dbReference>
<dbReference type="NCBIfam" id="TIGR00177">
    <property type="entry name" value="molyb_syn"/>
    <property type="match status" value="1"/>
</dbReference>
<dbReference type="NCBIfam" id="TIGR00199">
    <property type="entry name" value="PncC_domain"/>
    <property type="match status" value="1"/>
</dbReference>
<dbReference type="NCBIfam" id="NF001813">
    <property type="entry name" value="PRK00549.1"/>
    <property type="match status" value="1"/>
</dbReference>
<dbReference type="PANTHER" id="PTHR13939">
    <property type="entry name" value="NICOTINAMIDE-NUCLEOTIDE AMIDOHYDROLASE PNCC"/>
    <property type="match status" value="1"/>
</dbReference>
<dbReference type="PANTHER" id="PTHR13939:SF0">
    <property type="entry name" value="NMN AMIDOHYDROLASE-LIKE PROTEIN YFAY"/>
    <property type="match status" value="1"/>
</dbReference>
<dbReference type="Pfam" id="PF02464">
    <property type="entry name" value="CinA"/>
    <property type="match status" value="1"/>
</dbReference>
<dbReference type="Pfam" id="PF18146">
    <property type="entry name" value="CinA_KH"/>
    <property type="match status" value="1"/>
</dbReference>
<dbReference type="Pfam" id="PF00994">
    <property type="entry name" value="MoCF_biosynth"/>
    <property type="match status" value="1"/>
</dbReference>
<dbReference type="PIRSF" id="PIRSF006728">
    <property type="entry name" value="CinA"/>
    <property type="match status" value="1"/>
</dbReference>
<dbReference type="SMART" id="SM00852">
    <property type="entry name" value="MoCF_biosynth"/>
    <property type="match status" value="1"/>
</dbReference>
<dbReference type="SUPFAM" id="SSF142433">
    <property type="entry name" value="CinA-like"/>
    <property type="match status" value="1"/>
</dbReference>
<dbReference type="SUPFAM" id="SSF53218">
    <property type="entry name" value="Molybdenum cofactor biosynthesis proteins"/>
    <property type="match status" value="1"/>
</dbReference>
<proteinExistence type="inferred from homology"/>
<keyword id="KW-1185">Reference proteome</keyword>
<evidence type="ECO:0000255" key="1">
    <source>
        <dbReference type="HAMAP-Rule" id="MF_00226"/>
    </source>
</evidence>
<reference key="1">
    <citation type="journal article" date="2002" name="Proc. Natl. Acad. Sci. U.S.A.">
        <title>Complete genome sequence of Clostridium perfringens, an anaerobic flesh-eater.</title>
        <authorList>
            <person name="Shimizu T."/>
            <person name="Ohtani K."/>
            <person name="Hirakawa H."/>
            <person name="Ohshima K."/>
            <person name="Yamashita A."/>
            <person name="Shiba T."/>
            <person name="Ogasawara N."/>
            <person name="Hattori M."/>
            <person name="Kuhara S."/>
            <person name="Hayashi H."/>
        </authorList>
    </citation>
    <scope>NUCLEOTIDE SEQUENCE [LARGE SCALE GENOMIC DNA]</scope>
    <source>
        <strain>13 / Type A</strain>
    </source>
</reference>
<comment type="similarity">
    <text evidence="1">Belongs to the CinA family.</text>
</comment>
<sequence length="412" mass="45410">MKAEIMAIGTEILLGDIVNTNAQFLAKELANLGIGVYHQSVVGDNSERILEAFDNAFKNCDTIITTGGLGPTKDDLSKELAAKYFNMEMCLREELLCDLEDYFKKNNLEMTENNKKQCYFPKEAIILPNPNGTAPGAILEGENNKRIILLPGPPREMEPMFTNHVVPYLSKFTDSVLVSKILRVFGIGESKMEDLVCDLLDNENPTVAPYAKNIDVILRITAKGKDKEEAEKLIAPMEKEIRKRLGDNIYGEGEVTLEEVVGKLLVDKKMTVSTAESCTGGMVASTLINYPGISEVFMEGAVTYSNEAKMKRLGVKKETLEDFGAVSEECAREMAKGIAKNAGTRIGISTTGIAGPGGGTEEKPVGLVYAGLCIDGITKVKKFNFKADRQKVRTRTMMNVLDWLRRELEKID</sequence>
<accession>Q8XP33</accession>
<gene>
    <name evidence="1" type="primary">cinA</name>
    <name type="ordered locus">CPE0132</name>
</gene>
<protein>
    <recommendedName>
        <fullName evidence="1">Putative competence-damage inducible protein</fullName>
    </recommendedName>
</protein>
<name>CINA_CLOPE</name>
<feature type="chain" id="PRO_0000156755" description="Putative competence-damage inducible protein">
    <location>
        <begin position="1"/>
        <end position="412"/>
    </location>
</feature>